<reference key="1">
    <citation type="submission" date="2009-01" db="EMBL/GenBank/DDBJ databases">
        <title>Complete sequence of Anaeromyxobacter dehalogenans 2CP-1.</title>
        <authorList>
            <person name="Lucas S."/>
            <person name="Copeland A."/>
            <person name="Lapidus A."/>
            <person name="Glavina del Rio T."/>
            <person name="Dalin E."/>
            <person name="Tice H."/>
            <person name="Bruce D."/>
            <person name="Goodwin L."/>
            <person name="Pitluck S."/>
            <person name="Saunders E."/>
            <person name="Brettin T."/>
            <person name="Detter J.C."/>
            <person name="Han C."/>
            <person name="Larimer F."/>
            <person name="Land M."/>
            <person name="Hauser L."/>
            <person name="Kyrpides N."/>
            <person name="Ovchinnikova G."/>
            <person name="Beliaev A.S."/>
            <person name="Richardson P."/>
        </authorList>
    </citation>
    <scope>NUCLEOTIDE SEQUENCE [LARGE SCALE GENOMIC DNA]</scope>
    <source>
        <strain>2CP-1 / ATCC BAA-258</strain>
    </source>
</reference>
<protein>
    <recommendedName>
        <fullName evidence="1">Bifunctional protein GlmU</fullName>
    </recommendedName>
    <domain>
        <recommendedName>
            <fullName evidence="1">UDP-N-acetylglucosamine pyrophosphorylase</fullName>
            <ecNumber evidence="1">2.7.7.23</ecNumber>
        </recommendedName>
        <alternativeName>
            <fullName evidence="1">N-acetylglucosamine-1-phosphate uridyltransferase</fullName>
        </alternativeName>
    </domain>
    <domain>
        <recommendedName>
            <fullName evidence="1">Glucosamine-1-phosphate N-acetyltransferase</fullName>
            <ecNumber evidence="1">2.3.1.157</ecNumber>
        </recommendedName>
    </domain>
</protein>
<proteinExistence type="inferred from homology"/>
<sequence>MPRTRTPLAAIVLAAGKGTRMKSNKAKVLHEVAGRPLAYYPVKRALELGASPVVVVVGHQAEAVEAALSAALPEAPLRFAVQEQQLGTAHAVLAAKRALRGYRGPVLILSGDTPLLRAETLEAVVSAGRRARAAVSLATMTLEVPRGYGRVVRDARGRPARIVEEKDATEAERAVREVNAGLYCVDAELLWKKLAKVGTANAQREFYLTDLVPMAAQAGGVAGVEVPAEEASGVNDRVELSRANRVMVGRLAEAFMRAGVTIEDPARFDCDEGVEIGADAVIEPNVRLRGRTRVGARTRVGVGAVITDGVLADGVTVNPYTVISEAQVAEGAILGPFSRLRPGADIGPEAHVGNFVEVKKSRLGKGAKANHLAYLGDAEIGAGANIGAGTITCNYDGERKNPTRIGEGAFIGSDSILVAPIEIGAGAYVAAGSTLTDPVPAGALALGRARQVTKEGWVAQRQAEKQMKGTATGPASARKGRPAARRAS</sequence>
<gene>
    <name evidence="1" type="primary">glmU</name>
    <name type="ordered locus">A2cp1_4101</name>
</gene>
<organism>
    <name type="scientific">Anaeromyxobacter dehalogenans (strain 2CP-1 / ATCC BAA-258)</name>
    <dbReference type="NCBI Taxonomy" id="455488"/>
    <lineage>
        <taxon>Bacteria</taxon>
        <taxon>Pseudomonadati</taxon>
        <taxon>Myxococcota</taxon>
        <taxon>Myxococcia</taxon>
        <taxon>Myxococcales</taxon>
        <taxon>Cystobacterineae</taxon>
        <taxon>Anaeromyxobacteraceae</taxon>
        <taxon>Anaeromyxobacter</taxon>
    </lineage>
</organism>
<accession>B8J9N1</accession>
<evidence type="ECO:0000255" key="1">
    <source>
        <dbReference type="HAMAP-Rule" id="MF_01631"/>
    </source>
</evidence>
<evidence type="ECO:0000256" key="2">
    <source>
        <dbReference type="SAM" id="MobiDB-lite"/>
    </source>
</evidence>
<dbReference type="EC" id="2.7.7.23" evidence="1"/>
<dbReference type="EC" id="2.3.1.157" evidence="1"/>
<dbReference type="EMBL" id="CP001359">
    <property type="protein sequence ID" value="ACL67419.1"/>
    <property type="molecule type" value="Genomic_DNA"/>
</dbReference>
<dbReference type="RefSeq" id="WP_015935139.1">
    <property type="nucleotide sequence ID" value="NC_011891.1"/>
</dbReference>
<dbReference type="SMR" id="B8J9N1"/>
<dbReference type="KEGG" id="acp:A2cp1_4101"/>
<dbReference type="HOGENOM" id="CLU_029499_15_2_7"/>
<dbReference type="UniPathway" id="UPA00113">
    <property type="reaction ID" value="UER00532"/>
</dbReference>
<dbReference type="UniPathway" id="UPA00113">
    <property type="reaction ID" value="UER00533"/>
</dbReference>
<dbReference type="UniPathway" id="UPA00973"/>
<dbReference type="Proteomes" id="UP000007089">
    <property type="component" value="Chromosome"/>
</dbReference>
<dbReference type="GO" id="GO:0005737">
    <property type="term" value="C:cytoplasm"/>
    <property type="evidence" value="ECO:0007669"/>
    <property type="project" value="UniProtKB-SubCell"/>
</dbReference>
<dbReference type="GO" id="GO:0016020">
    <property type="term" value="C:membrane"/>
    <property type="evidence" value="ECO:0007669"/>
    <property type="project" value="GOC"/>
</dbReference>
<dbReference type="GO" id="GO:0019134">
    <property type="term" value="F:glucosamine-1-phosphate N-acetyltransferase activity"/>
    <property type="evidence" value="ECO:0007669"/>
    <property type="project" value="UniProtKB-UniRule"/>
</dbReference>
<dbReference type="GO" id="GO:0000287">
    <property type="term" value="F:magnesium ion binding"/>
    <property type="evidence" value="ECO:0007669"/>
    <property type="project" value="UniProtKB-UniRule"/>
</dbReference>
<dbReference type="GO" id="GO:0003977">
    <property type="term" value="F:UDP-N-acetylglucosamine diphosphorylase activity"/>
    <property type="evidence" value="ECO:0007669"/>
    <property type="project" value="UniProtKB-UniRule"/>
</dbReference>
<dbReference type="GO" id="GO:0000902">
    <property type="term" value="P:cell morphogenesis"/>
    <property type="evidence" value="ECO:0007669"/>
    <property type="project" value="UniProtKB-UniRule"/>
</dbReference>
<dbReference type="GO" id="GO:0071555">
    <property type="term" value="P:cell wall organization"/>
    <property type="evidence" value="ECO:0007669"/>
    <property type="project" value="UniProtKB-KW"/>
</dbReference>
<dbReference type="GO" id="GO:0009245">
    <property type="term" value="P:lipid A biosynthetic process"/>
    <property type="evidence" value="ECO:0007669"/>
    <property type="project" value="UniProtKB-UniRule"/>
</dbReference>
<dbReference type="GO" id="GO:0009252">
    <property type="term" value="P:peptidoglycan biosynthetic process"/>
    <property type="evidence" value="ECO:0007669"/>
    <property type="project" value="UniProtKB-UniRule"/>
</dbReference>
<dbReference type="GO" id="GO:0008360">
    <property type="term" value="P:regulation of cell shape"/>
    <property type="evidence" value="ECO:0007669"/>
    <property type="project" value="UniProtKB-KW"/>
</dbReference>
<dbReference type="GO" id="GO:0006048">
    <property type="term" value="P:UDP-N-acetylglucosamine biosynthetic process"/>
    <property type="evidence" value="ECO:0007669"/>
    <property type="project" value="UniProtKB-UniPathway"/>
</dbReference>
<dbReference type="CDD" id="cd02540">
    <property type="entry name" value="GT2_GlmU_N_bac"/>
    <property type="match status" value="1"/>
</dbReference>
<dbReference type="CDD" id="cd03353">
    <property type="entry name" value="LbH_GlmU_C"/>
    <property type="match status" value="1"/>
</dbReference>
<dbReference type="Gene3D" id="2.160.10.10">
    <property type="entry name" value="Hexapeptide repeat proteins"/>
    <property type="match status" value="1"/>
</dbReference>
<dbReference type="Gene3D" id="3.90.550.10">
    <property type="entry name" value="Spore Coat Polysaccharide Biosynthesis Protein SpsA, Chain A"/>
    <property type="match status" value="1"/>
</dbReference>
<dbReference type="HAMAP" id="MF_01631">
    <property type="entry name" value="GlmU"/>
    <property type="match status" value="1"/>
</dbReference>
<dbReference type="InterPro" id="IPR005882">
    <property type="entry name" value="Bifunctional_GlmU"/>
</dbReference>
<dbReference type="InterPro" id="IPR050065">
    <property type="entry name" value="GlmU-like"/>
</dbReference>
<dbReference type="InterPro" id="IPR038009">
    <property type="entry name" value="GlmU_C_LbH"/>
</dbReference>
<dbReference type="InterPro" id="IPR001451">
    <property type="entry name" value="Hexapep"/>
</dbReference>
<dbReference type="InterPro" id="IPR018357">
    <property type="entry name" value="Hexapep_transf_CS"/>
</dbReference>
<dbReference type="InterPro" id="IPR025877">
    <property type="entry name" value="MobA-like_NTP_Trfase"/>
</dbReference>
<dbReference type="InterPro" id="IPR029044">
    <property type="entry name" value="Nucleotide-diphossugar_trans"/>
</dbReference>
<dbReference type="InterPro" id="IPR011004">
    <property type="entry name" value="Trimer_LpxA-like_sf"/>
</dbReference>
<dbReference type="NCBIfam" id="TIGR01173">
    <property type="entry name" value="glmU"/>
    <property type="match status" value="1"/>
</dbReference>
<dbReference type="PANTHER" id="PTHR43584:SF3">
    <property type="entry name" value="BIFUNCTIONAL PROTEIN GLMU"/>
    <property type="match status" value="1"/>
</dbReference>
<dbReference type="PANTHER" id="PTHR43584">
    <property type="entry name" value="NUCLEOTIDYL TRANSFERASE"/>
    <property type="match status" value="1"/>
</dbReference>
<dbReference type="Pfam" id="PF00132">
    <property type="entry name" value="Hexapep"/>
    <property type="match status" value="1"/>
</dbReference>
<dbReference type="Pfam" id="PF12804">
    <property type="entry name" value="NTP_transf_3"/>
    <property type="match status" value="1"/>
</dbReference>
<dbReference type="SUPFAM" id="SSF53448">
    <property type="entry name" value="Nucleotide-diphospho-sugar transferases"/>
    <property type="match status" value="1"/>
</dbReference>
<dbReference type="SUPFAM" id="SSF51161">
    <property type="entry name" value="Trimeric LpxA-like enzymes"/>
    <property type="match status" value="1"/>
</dbReference>
<dbReference type="PROSITE" id="PS00101">
    <property type="entry name" value="HEXAPEP_TRANSFERASES"/>
    <property type="match status" value="1"/>
</dbReference>
<name>GLMU_ANAD2</name>
<keyword id="KW-0012">Acyltransferase</keyword>
<keyword id="KW-0133">Cell shape</keyword>
<keyword id="KW-0961">Cell wall biogenesis/degradation</keyword>
<keyword id="KW-0963">Cytoplasm</keyword>
<keyword id="KW-0460">Magnesium</keyword>
<keyword id="KW-0479">Metal-binding</keyword>
<keyword id="KW-0511">Multifunctional enzyme</keyword>
<keyword id="KW-0548">Nucleotidyltransferase</keyword>
<keyword id="KW-0573">Peptidoglycan synthesis</keyword>
<keyword id="KW-0677">Repeat</keyword>
<keyword id="KW-0808">Transferase</keyword>
<comment type="function">
    <text evidence="1">Catalyzes the last two sequential reactions in the de novo biosynthetic pathway for UDP-N-acetylglucosamine (UDP-GlcNAc). The C-terminal domain catalyzes the transfer of acetyl group from acetyl coenzyme A to glucosamine-1-phosphate (GlcN-1-P) to produce N-acetylglucosamine-1-phosphate (GlcNAc-1-P), which is converted into UDP-GlcNAc by the transfer of uridine 5-monophosphate (from uridine 5-triphosphate), a reaction catalyzed by the N-terminal domain.</text>
</comment>
<comment type="catalytic activity">
    <reaction evidence="1">
        <text>alpha-D-glucosamine 1-phosphate + acetyl-CoA = N-acetyl-alpha-D-glucosamine 1-phosphate + CoA + H(+)</text>
        <dbReference type="Rhea" id="RHEA:13725"/>
        <dbReference type="ChEBI" id="CHEBI:15378"/>
        <dbReference type="ChEBI" id="CHEBI:57287"/>
        <dbReference type="ChEBI" id="CHEBI:57288"/>
        <dbReference type="ChEBI" id="CHEBI:57776"/>
        <dbReference type="ChEBI" id="CHEBI:58516"/>
        <dbReference type="EC" id="2.3.1.157"/>
    </reaction>
</comment>
<comment type="catalytic activity">
    <reaction evidence="1">
        <text>N-acetyl-alpha-D-glucosamine 1-phosphate + UTP + H(+) = UDP-N-acetyl-alpha-D-glucosamine + diphosphate</text>
        <dbReference type="Rhea" id="RHEA:13509"/>
        <dbReference type="ChEBI" id="CHEBI:15378"/>
        <dbReference type="ChEBI" id="CHEBI:33019"/>
        <dbReference type="ChEBI" id="CHEBI:46398"/>
        <dbReference type="ChEBI" id="CHEBI:57705"/>
        <dbReference type="ChEBI" id="CHEBI:57776"/>
        <dbReference type="EC" id="2.7.7.23"/>
    </reaction>
</comment>
<comment type="cofactor">
    <cofactor evidence="1">
        <name>Mg(2+)</name>
        <dbReference type="ChEBI" id="CHEBI:18420"/>
    </cofactor>
    <text evidence="1">Binds 1 Mg(2+) ion per subunit.</text>
</comment>
<comment type="pathway">
    <text evidence="1">Nucleotide-sugar biosynthesis; UDP-N-acetyl-alpha-D-glucosamine biosynthesis; N-acetyl-alpha-D-glucosamine 1-phosphate from alpha-D-glucosamine 6-phosphate (route II): step 2/2.</text>
</comment>
<comment type="pathway">
    <text evidence="1">Nucleotide-sugar biosynthesis; UDP-N-acetyl-alpha-D-glucosamine biosynthesis; UDP-N-acetyl-alpha-D-glucosamine from N-acetyl-alpha-D-glucosamine 1-phosphate: step 1/1.</text>
</comment>
<comment type="pathway">
    <text evidence="1">Bacterial outer membrane biogenesis; LPS lipid A biosynthesis.</text>
</comment>
<comment type="subunit">
    <text evidence="1">Homotrimer.</text>
</comment>
<comment type="subcellular location">
    <subcellularLocation>
        <location evidence="1">Cytoplasm</location>
    </subcellularLocation>
</comment>
<comment type="similarity">
    <text evidence="1">In the N-terminal section; belongs to the N-acetylglucosamine-1-phosphate uridyltransferase family.</text>
</comment>
<comment type="similarity">
    <text evidence="1">In the C-terminal section; belongs to the transferase hexapeptide repeat family.</text>
</comment>
<feature type="chain" id="PRO_1000186392" description="Bifunctional protein GlmU">
    <location>
        <begin position="1"/>
        <end position="488"/>
    </location>
</feature>
<feature type="region of interest" description="Pyrophosphorylase" evidence="1">
    <location>
        <begin position="1"/>
        <end position="237"/>
    </location>
</feature>
<feature type="region of interest" description="Linker" evidence="1">
    <location>
        <begin position="238"/>
        <end position="258"/>
    </location>
</feature>
<feature type="region of interest" description="N-acetyltransferase" evidence="1">
    <location>
        <begin position="259"/>
        <end position="488"/>
    </location>
</feature>
<feature type="region of interest" description="Disordered" evidence="2">
    <location>
        <begin position="459"/>
        <end position="488"/>
    </location>
</feature>
<feature type="compositionally biased region" description="Basic residues" evidence="2">
    <location>
        <begin position="478"/>
        <end position="488"/>
    </location>
</feature>
<feature type="active site" description="Proton acceptor" evidence="1">
    <location>
        <position position="371"/>
    </location>
</feature>
<feature type="binding site" evidence="1">
    <location>
        <begin position="13"/>
        <end position="16"/>
    </location>
    <ligand>
        <name>UDP-N-acetyl-alpha-D-glucosamine</name>
        <dbReference type="ChEBI" id="CHEBI:57705"/>
    </ligand>
</feature>
<feature type="binding site" evidence="1">
    <location>
        <position position="27"/>
    </location>
    <ligand>
        <name>UDP-N-acetyl-alpha-D-glucosamine</name>
        <dbReference type="ChEBI" id="CHEBI:57705"/>
    </ligand>
</feature>
<feature type="binding site" evidence="1">
    <location>
        <position position="82"/>
    </location>
    <ligand>
        <name>UDP-N-acetyl-alpha-D-glucosamine</name>
        <dbReference type="ChEBI" id="CHEBI:57705"/>
    </ligand>
</feature>
<feature type="binding site" evidence="1">
    <location>
        <begin position="87"/>
        <end position="88"/>
    </location>
    <ligand>
        <name>UDP-N-acetyl-alpha-D-glucosamine</name>
        <dbReference type="ChEBI" id="CHEBI:57705"/>
    </ligand>
</feature>
<feature type="binding site" evidence="1">
    <location>
        <begin position="110"/>
        <end position="112"/>
    </location>
    <ligand>
        <name>UDP-N-acetyl-alpha-D-glucosamine</name>
        <dbReference type="ChEBI" id="CHEBI:57705"/>
    </ligand>
</feature>
<feature type="binding site" evidence="1">
    <location>
        <position position="112"/>
    </location>
    <ligand>
        <name>Mg(2+)</name>
        <dbReference type="ChEBI" id="CHEBI:18420"/>
    </ligand>
</feature>
<feature type="binding site" evidence="1">
    <location>
        <position position="149"/>
    </location>
    <ligand>
        <name>UDP-N-acetyl-alpha-D-glucosamine</name>
        <dbReference type="ChEBI" id="CHEBI:57705"/>
    </ligand>
</feature>
<feature type="binding site" evidence="1">
    <location>
        <position position="164"/>
    </location>
    <ligand>
        <name>UDP-N-acetyl-alpha-D-glucosamine</name>
        <dbReference type="ChEBI" id="CHEBI:57705"/>
    </ligand>
</feature>
<feature type="binding site" evidence="1">
    <location>
        <position position="179"/>
    </location>
    <ligand>
        <name>UDP-N-acetyl-alpha-D-glucosamine</name>
        <dbReference type="ChEBI" id="CHEBI:57705"/>
    </ligand>
</feature>
<feature type="binding site" evidence="1">
    <location>
        <position position="235"/>
    </location>
    <ligand>
        <name>Mg(2+)</name>
        <dbReference type="ChEBI" id="CHEBI:18420"/>
    </ligand>
</feature>
<feature type="binding site" evidence="1">
    <location>
        <position position="235"/>
    </location>
    <ligand>
        <name>UDP-N-acetyl-alpha-D-glucosamine</name>
        <dbReference type="ChEBI" id="CHEBI:57705"/>
    </ligand>
</feature>
<feature type="binding site" evidence="1">
    <location>
        <position position="341"/>
    </location>
    <ligand>
        <name>UDP-N-acetyl-alpha-D-glucosamine</name>
        <dbReference type="ChEBI" id="CHEBI:57705"/>
    </ligand>
</feature>
<feature type="binding site" evidence="1">
    <location>
        <position position="359"/>
    </location>
    <ligand>
        <name>UDP-N-acetyl-alpha-D-glucosamine</name>
        <dbReference type="ChEBI" id="CHEBI:57705"/>
    </ligand>
</feature>
<feature type="binding site" evidence="1">
    <location>
        <position position="374"/>
    </location>
    <ligand>
        <name>UDP-N-acetyl-alpha-D-glucosamine</name>
        <dbReference type="ChEBI" id="CHEBI:57705"/>
    </ligand>
</feature>
<feature type="binding site" evidence="1">
    <location>
        <position position="385"/>
    </location>
    <ligand>
        <name>UDP-N-acetyl-alpha-D-glucosamine</name>
        <dbReference type="ChEBI" id="CHEBI:57705"/>
    </ligand>
</feature>
<feature type="binding site" evidence="1">
    <location>
        <position position="388"/>
    </location>
    <ligand>
        <name>acetyl-CoA</name>
        <dbReference type="ChEBI" id="CHEBI:57288"/>
    </ligand>
</feature>
<feature type="binding site" evidence="1">
    <location>
        <begin position="394"/>
        <end position="395"/>
    </location>
    <ligand>
        <name>acetyl-CoA</name>
        <dbReference type="ChEBI" id="CHEBI:57288"/>
    </ligand>
</feature>
<feature type="binding site" evidence="1">
    <location>
        <position position="413"/>
    </location>
    <ligand>
        <name>acetyl-CoA</name>
        <dbReference type="ChEBI" id="CHEBI:57288"/>
    </ligand>
</feature>
<feature type="binding site" evidence="1">
    <location>
        <position position="431"/>
    </location>
    <ligand>
        <name>acetyl-CoA</name>
        <dbReference type="ChEBI" id="CHEBI:57288"/>
    </ligand>
</feature>
<feature type="binding site" evidence="1">
    <location>
        <position position="448"/>
    </location>
    <ligand>
        <name>acetyl-CoA</name>
        <dbReference type="ChEBI" id="CHEBI:57288"/>
    </ligand>
</feature>